<organism>
    <name type="scientific">Cronobacter sakazakii (strain ATCC BAA-894)</name>
    <name type="common">Enterobacter sakazakii</name>
    <dbReference type="NCBI Taxonomy" id="290339"/>
    <lineage>
        <taxon>Bacteria</taxon>
        <taxon>Pseudomonadati</taxon>
        <taxon>Pseudomonadota</taxon>
        <taxon>Gammaproteobacteria</taxon>
        <taxon>Enterobacterales</taxon>
        <taxon>Enterobacteriaceae</taxon>
        <taxon>Cronobacter</taxon>
    </lineage>
</organism>
<dbReference type="EC" id="3.5.4.5" evidence="1"/>
<dbReference type="EMBL" id="CP000783">
    <property type="protein sequence ID" value="ABU76360.1"/>
    <property type="molecule type" value="Genomic_DNA"/>
</dbReference>
<dbReference type="RefSeq" id="WP_012124277.1">
    <property type="nucleotide sequence ID" value="NC_009778.1"/>
</dbReference>
<dbReference type="SMR" id="A7MLJ4"/>
<dbReference type="KEGG" id="esa:ESA_01092"/>
<dbReference type="PATRIC" id="fig|290339.8.peg.966"/>
<dbReference type="HOGENOM" id="CLU_052424_0_0_6"/>
<dbReference type="Proteomes" id="UP000000260">
    <property type="component" value="Chromosome"/>
</dbReference>
<dbReference type="GO" id="GO:0005829">
    <property type="term" value="C:cytosol"/>
    <property type="evidence" value="ECO:0007669"/>
    <property type="project" value="TreeGrafter"/>
</dbReference>
<dbReference type="GO" id="GO:0004126">
    <property type="term" value="F:cytidine deaminase activity"/>
    <property type="evidence" value="ECO:0007669"/>
    <property type="project" value="UniProtKB-UniRule"/>
</dbReference>
<dbReference type="GO" id="GO:0042802">
    <property type="term" value="F:identical protein binding"/>
    <property type="evidence" value="ECO:0007669"/>
    <property type="project" value="UniProtKB-ARBA"/>
</dbReference>
<dbReference type="GO" id="GO:0008270">
    <property type="term" value="F:zinc ion binding"/>
    <property type="evidence" value="ECO:0007669"/>
    <property type="project" value="UniProtKB-UniRule"/>
</dbReference>
<dbReference type="GO" id="GO:0009972">
    <property type="term" value="P:cytidine deamination"/>
    <property type="evidence" value="ECO:0007669"/>
    <property type="project" value="InterPro"/>
</dbReference>
<dbReference type="CDD" id="cd01283">
    <property type="entry name" value="cytidine_deaminase"/>
    <property type="match status" value="2"/>
</dbReference>
<dbReference type="FunFam" id="3.40.140.10:FF:000006">
    <property type="entry name" value="Cytidine deaminase"/>
    <property type="match status" value="1"/>
</dbReference>
<dbReference type="FunFam" id="3.40.140.10:FF:000007">
    <property type="entry name" value="Cytidine deaminase"/>
    <property type="match status" value="1"/>
</dbReference>
<dbReference type="Gene3D" id="3.40.140.10">
    <property type="entry name" value="Cytidine Deaminase, domain 2"/>
    <property type="match status" value="2"/>
</dbReference>
<dbReference type="HAMAP" id="MF_01558">
    <property type="entry name" value="Cyt_deam"/>
    <property type="match status" value="1"/>
</dbReference>
<dbReference type="InterPro" id="IPR016192">
    <property type="entry name" value="APOBEC/CMP_deaminase_Zn-bd"/>
</dbReference>
<dbReference type="InterPro" id="IPR002125">
    <property type="entry name" value="CMP_dCMP_dom"/>
</dbReference>
<dbReference type="InterPro" id="IPR013171">
    <property type="entry name" value="Cyd/dCyd_deaminase_Zn-bd"/>
</dbReference>
<dbReference type="InterPro" id="IPR050202">
    <property type="entry name" value="Cyt/Deoxycyt_deaminase"/>
</dbReference>
<dbReference type="InterPro" id="IPR006263">
    <property type="entry name" value="Cyt_deam_dimer"/>
</dbReference>
<dbReference type="InterPro" id="IPR016193">
    <property type="entry name" value="Cytidine_deaminase-like"/>
</dbReference>
<dbReference type="InterPro" id="IPR020797">
    <property type="entry name" value="Cytidine_deaminase_bacteria"/>
</dbReference>
<dbReference type="NCBIfam" id="TIGR01355">
    <property type="entry name" value="cyt_deam_dimer"/>
    <property type="match status" value="1"/>
</dbReference>
<dbReference type="NCBIfam" id="NF006537">
    <property type="entry name" value="PRK09027.1"/>
    <property type="match status" value="1"/>
</dbReference>
<dbReference type="PANTHER" id="PTHR11644">
    <property type="entry name" value="CYTIDINE DEAMINASE"/>
    <property type="match status" value="1"/>
</dbReference>
<dbReference type="PANTHER" id="PTHR11644:SF2">
    <property type="entry name" value="CYTIDINE DEAMINASE"/>
    <property type="match status" value="1"/>
</dbReference>
<dbReference type="Pfam" id="PF00383">
    <property type="entry name" value="dCMP_cyt_deam_1"/>
    <property type="match status" value="1"/>
</dbReference>
<dbReference type="Pfam" id="PF08211">
    <property type="entry name" value="dCMP_cyt_deam_2"/>
    <property type="match status" value="1"/>
</dbReference>
<dbReference type="PIRSF" id="PIRSF006334">
    <property type="entry name" value="Cdd_plus_pseudo"/>
    <property type="match status" value="1"/>
</dbReference>
<dbReference type="SUPFAM" id="SSF53927">
    <property type="entry name" value="Cytidine deaminase-like"/>
    <property type="match status" value="2"/>
</dbReference>
<dbReference type="PROSITE" id="PS00903">
    <property type="entry name" value="CYT_DCMP_DEAMINASES_1"/>
    <property type="match status" value="1"/>
</dbReference>
<dbReference type="PROSITE" id="PS51747">
    <property type="entry name" value="CYT_DCMP_DEAMINASES_2"/>
    <property type="match status" value="2"/>
</dbReference>
<accession>A7MLJ4</accession>
<sequence length="294" mass="31350">MHPRFETAFAQLPAALQAALAPLIADTYFPAMLSAEQVADVRRQSGLDDDALAFALLPLAAACAQTEISHFNVGAVARGLSGNLYFGGNMEFRGAAMQQTIHAEQSAITHAWMRGETGLAAITVNYTPCGHCRQFMNELNSGLTLRINLPGRAPSQLGDYLPDAFGPRDLDIKTLIFDTENHGYALKGDALTQAAIAAANRSHAPYSQSPSGLAIETRDGEIFTGSYAENAAFNPSLPPLQAALNLMSLNGYAWADIKRVALAERDDATIVQRDATAATLKALGFTNLELVTLA</sequence>
<comment type="function">
    <text evidence="1">This enzyme scavenges exogenous and endogenous cytidine and 2'-deoxycytidine for UMP synthesis.</text>
</comment>
<comment type="catalytic activity">
    <reaction evidence="1">
        <text>cytidine + H2O + H(+) = uridine + NH4(+)</text>
        <dbReference type="Rhea" id="RHEA:16069"/>
        <dbReference type="ChEBI" id="CHEBI:15377"/>
        <dbReference type="ChEBI" id="CHEBI:15378"/>
        <dbReference type="ChEBI" id="CHEBI:16704"/>
        <dbReference type="ChEBI" id="CHEBI:17562"/>
        <dbReference type="ChEBI" id="CHEBI:28938"/>
        <dbReference type="EC" id="3.5.4.5"/>
    </reaction>
</comment>
<comment type="catalytic activity">
    <reaction evidence="1">
        <text>2'-deoxycytidine + H2O + H(+) = 2'-deoxyuridine + NH4(+)</text>
        <dbReference type="Rhea" id="RHEA:13433"/>
        <dbReference type="ChEBI" id="CHEBI:15377"/>
        <dbReference type="ChEBI" id="CHEBI:15378"/>
        <dbReference type="ChEBI" id="CHEBI:15698"/>
        <dbReference type="ChEBI" id="CHEBI:16450"/>
        <dbReference type="ChEBI" id="CHEBI:28938"/>
        <dbReference type="EC" id="3.5.4.5"/>
    </reaction>
</comment>
<comment type="cofactor">
    <cofactor evidence="1">
        <name>Zn(2+)</name>
        <dbReference type="ChEBI" id="CHEBI:29105"/>
    </cofactor>
    <text evidence="1">Binds 1 zinc ion.</text>
</comment>
<comment type="subunit">
    <text evidence="1">Homodimer.</text>
</comment>
<comment type="similarity">
    <text evidence="1">Belongs to the cytidine and deoxycytidylate deaminase family.</text>
</comment>
<reference key="1">
    <citation type="journal article" date="2010" name="PLoS ONE">
        <title>Genome sequence of Cronobacter sakazakii BAA-894 and comparative genomic hybridization analysis with other Cronobacter species.</title>
        <authorList>
            <person name="Kucerova E."/>
            <person name="Clifton S.W."/>
            <person name="Xia X.Q."/>
            <person name="Long F."/>
            <person name="Porwollik S."/>
            <person name="Fulton L."/>
            <person name="Fronick C."/>
            <person name="Minx P."/>
            <person name="Kyung K."/>
            <person name="Warren W."/>
            <person name="Fulton R."/>
            <person name="Feng D."/>
            <person name="Wollam A."/>
            <person name="Shah N."/>
            <person name="Bhonagiri V."/>
            <person name="Nash W.E."/>
            <person name="Hallsworth-Pepin K."/>
            <person name="Wilson R.K."/>
            <person name="McClelland M."/>
            <person name="Forsythe S.J."/>
        </authorList>
    </citation>
    <scope>NUCLEOTIDE SEQUENCE [LARGE SCALE GENOMIC DNA]</scope>
    <source>
        <strain>ATCC BAA-894</strain>
    </source>
</reference>
<name>CDD_CROS8</name>
<protein>
    <recommendedName>
        <fullName evidence="1">Cytidine deaminase</fullName>
        <ecNumber evidence="1">3.5.4.5</ecNumber>
    </recommendedName>
    <alternativeName>
        <fullName evidence="1">Cytidine aminohydrolase</fullName>
        <shortName evidence="1">CDA</shortName>
    </alternativeName>
</protein>
<evidence type="ECO:0000255" key="1">
    <source>
        <dbReference type="HAMAP-Rule" id="MF_01558"/>
    </source>
</evidence>
<evidence type="ECO:0000255" key="2">
    <source>
        <dbReference type="PROSITE-ProRule" id="PRU01083"/>
    </source>
</evidence>
<feature type="chain" id="PRO_1000068954" description="Cytidine deaminase">
    <location>
        <begin position="1"/>
        <end position="294"/>
    </location>
</feature>
<feature type="domain" description="CMP/dCMP-type deaminase 1" evidence="2">
    <location>
        <begin position="48"/>
        <end position="168"/>
    </location>
</feature>
<feature type="domain" description="CMP/dCMP-type deaminase 2" evidence="2">
    <location>
        <begin position="186"/>
        <end position="294"/>
    </location>
</feature>
<feature type="active site" description="Proton donor" evidence="1">
    <location>
        <position position="104"/>
    </location>
</feature>
<feature type="binding site" evidence="1">
    <location>
        <begin position="89"/>
        <end position="91"/>
    </location>
    <ligand>
        <name>substrate</name>
    </ligand>
</feature>
<feature type="binding site" evidence="1">
    <location>
        <position position="102"/>
    </location>
    <ligand>
        <name>Zn(2+)</name>
        <dbReference type="ChEBI" id="CHEBI:29105"/>
        <note>catalytic</note>
    </ligand>
</feature>
<feature type="binding site" evidence="1">
    <location>
        <position position="129"/>
    </location>
    <ligand>
        <name>Zn(2+)</name>
        <dbReference type="ChEBI" id="CHEBI:29105"/>
        <note>catalytic</note>
    </ligand>
</feature>
<feature type="binding site" evidence="1">
    <location>
        <position position="132"/>
    </location>
    <ligand>
        <name>Zn(2+)</name>
        <dbReference type="ChEBI" id="CHEBI:29105"/>
        <note>catalytic</note>
    </ligand>
</feature>
<proteinExistence type="inferred from homology"/>
<gene>
    <name evidence="1" type="primary">cdd</name>
    <name type="ordered locus">ESA_01092</name>
</gene>
<keyword id="KW-0378">Hydrolase</keyword>
<keyword id="KW-0479">Metal-binding</keyword>
<keyword id="KW-1185">Reference proteome</keyword>
<keyword id="KW-0862">Zinc</keyword>